<keyword id="KW-0067">ATP-binding</keyword>
<keyword id="KW-0315">Glutamine amidotransferase</keyword>
<keyword id="KW-0436">Ligase</keyword>
<keyword id="KW-0460">Magnesium</keyword>
<keyword id="KW-0479">Metal-binding</keyword>
<keyword id="KW-0547">Nucleotide-binding</keyword>
<keyword id="KW-0665">Pyrimidine biosynthesis</keyword>
<gene>
    <name evidence="1" type="primary">pyrG</name>
    <name type="ordered locus">BAMEG_5627</name>
</gene>
<comment type="function">
    <text evidence="1">Catalyzes the ATP-dependent amination of UTP to CTP with either L-glutamine or ammonia as the source of nitrogen. Regulates intracellular CTP levels through interactions with the four ribonucleotide triphosphates.</text>
</comment>
<comment type="catalytic activity">
    <reaction evidence="1">
        <text>UTP + L-glutamine + ATP + H2O = CTP + L-glutamate + ADP + phosphate + 2 H(+)</text>
        <dbReference type="Rhea" id="RHEA:26426"/>
        <dbReference type="ChEBI" id="CHEBI:15377"/>
        <dbReference type="ChEBI" id="CHEBI:15378"/>
        <dbReference type="ChEBI" id="CHEBI:29985"/>
        <dbReference type="ChEBI" id="CHEBI:30616"/>
        <dbReference type="ChEBI" id="CHEBI:37563"/>
        <dbReference type="ChEBI" id="CHEBI:43474"/>
        <dbReference type="ChEBI" id="CHEBI:46398"/>
        <dbReference type="ChEBI" id="CHEBI:58359"/>
        <dbReference type="ChEBI" id="CHEBI:456216"/>
        <dbReference type="EC" id="6.3.4.2"/>
    </reaction>
</comment>
<comment type="catalytic activity">
    <reaction evidence="1">
        <text>L-glutamine + H2O = L-glutamate + NH4(+)</text>
        <dbReference type="Rhea" id="RHEA:15889"/>
        <dbReference type="ChEBI" id="CHEBI:15377"/>
        <dbReference type="ChEBI" id="CHEBI:28938"/>
        <dbReference type="ChEBI" id="CHEBI:29985"/>
        <dbReference type="ChEBI" id="CHEBI:58359"/>
    </reaction>
</comment>
<comment type="catalytic activity">
    <reaction evidence="1">
        <text>UTP + NH4(+) + ATP = CTP + ADP + phosphate + 2 H(+)</text>
        <dbReference type="Rhea" id="RHEA:16597"/>
        <dbReference type="ChEBI" id="CHEBI:15378"/>
        <dbReference type="ChEBI" id="CHEBI:28938"/>
        <dbReference type="ChEBI" id="CHEBI:30616"/>
        <dbReference type="ChEBI" id="CHEBI:37563"/>
        <dbReference type="ChEBI" id="CHEBI:43474"/>
        <dbReference type="ChEBI" id="CHEBI:46398"/>
        <dbReference type="ChEBI" id="CHEBI:456216"/>
    </reaction>
</comment>
<comment type="activity regulation">
    <text evidence="1">Allosterically activated by GTP, when glutamine is the substrate; GTP has no effect on the reaction when ammonia is the substrate. The allosteric effector GTP functions by stabilizing the protein conformation that binds the tetrahedral intermediate(s) formed during glutamine hydrolysis. Inhibited by the product CTP, via allosteric rather than competitive inhibition.</text>
</comment>
<comment type="pathway">
    <text evidence="1">Pyrimidine metabolism; CTP biosynthesis via de novo pathway; CTP from UDP: step 2/2.</text>
</comment>
<comment type="subunit">
    <text evidence="1">Homotetramer.</text>
</comment>
<comment type="miscellaneous">
    <text evidence="1">CTPSs have evolved a hybrid strategy for distinguishing between UTP and CTP. The overlapping regions of the product feedback inhibitory and substrate sites recognize a common feature in both compounds, the triphosphate moiety. To differentiate isosteric substrate and product pyrimidine rings, an additional pocket far from the expected kinase/ligase catalytic site, specifically recognizes the cytosine and ribose portions of the product inhibitor.</text>
</comment>
<comment type="similarity">
    <text evidence="1">Belongs to the CTP synthase family.</text>
</comment>
<dbReference type="EC" id="6.3.4.2" evidence="1"/>
<dbReference type="EMBL" id="CP001215">
    <property type="protein sequence ID" value="ACP16846.1"/>
    <property type="molecule type" value="Genomic_DNA"/>
</dbReference>
<dbReference type="RefSeq" id="WP_000170456.1">
    <property type="nucleotide sequence ID" value="NC_012581.1"/>
</dbReference>
<dbReference type="SMR" id="C3LFL2"/>
<dbReference type="GeneID" id="45025168"/>
<dbReference type="KEGG" id="bah:BAMEG_5627"/>
<dbReference type="HOGENOM" id="CLU_011675_5_0_9"/>
<dbReference type="UniPathway" id="UPA00159">
    <property type="reaction ID" value="UER00277"/>
</dbReference>
<dbReference type="GO" id="GO:0005829">
    <property type="term" value="C:cytosol"/>
    <property type="evidence" value="ECO:0007669"/>
    <property type="project" value="TreeGrafter"/>
</dbReference>
<dbReference type="GO" id="GO:0005524">
    <property type="term" value="F:ATP binding"/>
    <property type="evidence" value="ECO:0007669"/>
    <property type="project" value="UniProtKB-KW"/>
</dbReference>
<dbReference type="GO" id="GO:0003883">
    <property type="term" value="F:CTP synthase activity"/>
    <property type="evidence" value="ECO:0007669"/>
    <property type="project" value="UniProtKB-UniRule"/>
</dbReference>
<dbReference type="GO" id="GO:0004359">
    <property type="term" value="F:glutaminase activity"/>
    <property type="evidence" value="ECO:0007669"/>
    <property type="project" value="RHEA"/>
</dbReference>
<dbReference type="GO" id="GO:0042802">
    <property type="term" value="F:identical protein binding"/>
    <property type="evidence" value="ECO:0007669"/>
    <property type="project" value="TreeGrafter"/>
</dbReference>
<dbReference type="GO" id="GO:0046872">
    <property type="term" value="F:metal ion binding"/>
    <property type="evidence" value="ECO:0007669"/>
    <property type="project" value="UniProtKB-KW"/>
</dbReference>
<dbReference type="GO" id="GO:0044210">
    <property type="term" value="P:'de novo' CTP biosynthetic process"/>
    <property type="evidence" value="ECO:0007669"/>
    <property type="project" value="UniProtKB-UniRule"/>
</dbReference>
<dbReference type="GO" id="GO:0019856">
    <property type="term" value="P:pyrimidine nucleobase biosynthetic process"/>
    <property type="evidence" value="ECO:0007669"/>
    <property type="project" value="TreeGrafter"/>
</dbReference>
<dbReference type="CDD" id="cd03113">
    <property type="entry name" value="CTPS_N"/>
    <property type="match status" value="1"/>
</dbReference>
<dbReference type="CDD" id="cd01746">
    <property type="entry name" value="GATase1_CTP_Synthase"/>
    <property type="match status" value="1"/>
</dbReference>
<dbReference type="FunFam" id="3.40.50.300:FF:000009">
    <property type="entry name" value="CTP synthase"/>
    <property type="match status" value="1"/>
</dbReference>
<dbReference type="FunFam" id="3.40.50.880:FF:000002">
    <property type="entry name" value="CTP synthase"/>
    <property type="match status" value="1"/>
</dbReference>
<dbReference type="Gene3D" id="3.40.50.880">
    <property type="match status" value="1"/>
</dbReference>
<dbReference type="Gene3D" id="3.40.50.300">
    <property type="entry name" value="P-loop containing nucleotide triphosphate hydrolases"/>
    <property type="match status" value="1"/>
</dbReference>
<dbReference type="HAMAP" id="MF_01227">
    <property type="entry name" value="PyrG"/>
    <property type="match status" value="1"/>
</dbReference>
<dbReference type="InterPro" id="IPR029062">
    <property type="entry name" value="Class_I_gatase-like"/>
</dbReference>
<dbReference type="InterPro" id="IPR004468">
    <property type="entry name" value="CTP_synthase"/>
</dbReference>
<dbReference type="InterPro" id="IPR017456">
    <property type="entry name" value="CTP_synthase_N"/>
</dbReference>
<dbReference type="InterPro" id="IPR017926">
    <property type="entry name" value="GATASE"/>
</dbReference>
<dbReference type="InterPro" id="IPR033828">
    <property type="entry name" value="GATase1_CTP_Synthase"/>
</dbReference>
<dbReference type="InterPro" id="IPR027417">
    <property type="entry name" value="P-loop_NTPase"/>
</dbReference>
<dbReference type="NCBIfam" id="NF003792">
    <property type="entry name" value="PRK05380.1"/>
    <property type="match status" value="1"/>
</dbReference>
<dbReference type="NCBIfam" id="TIGR00337">
    <property type="entry name" value="PyrG"/>
    <property type="match status" value="1"/>
</dbReference>
<dbReference type="PANTHER" id="PTHR11550">
    <property type="entry name" value="CTP SYNTHASE"/>
    <property type="match status" value="1"/>
</dbReference>
<dbReference type="PANTHER" id="PTHR11550:SF0">
    <property type="entry name" value="CTP SYNTHASE-RELATED"/>
    <property type="match status" value="1"/>
</dbReference>
<dbReference type="Pfam" id="PF06418">
    <property type="entry name" value="CTP_synth_N"/>
    <property type="match status" value="1"/>
</dbReference>
<dbReference type="Pfam" id="PF00117">
    <property type="entry name" value="GATase"/>
    <property type="match status" value="1"/>
</dbReference>
<dbReference type="SUPFAM" id="SSF52317">
    <property type="entry name" value="Class I glutamine amidotransferase-like"/>
    <property type="match status" value="1"/>
</dbReference>
<dbReference type="SUPFAM" id="SSF52540">
    <property type="entry name" value="P-loop containing nucleoside triphosphate hydrolases"/>
    <property type="match status" value="1"/>
</dbReference>
<dbReference type="PROSITE" id="PS51273">
    <property type="entry name" value="GATASE_TYPE_1"/>
    <property type="match status" value="1"/>
</dbReference>
<sequence>MTKYIFVTGGVVSSLGKGITAASLGRLLKNRGLNVTIQKFDPYINVDPGTMSPYQHGEVFVTDDGAETDLDLGHYERFIDINLNKYSNVTTGKIYSSVLQKERRGEYLGGTVQVIPHITNEIKERVYRSGRETNADVVITEIGGTVGDIESLPFLEAIRQIKSDIGRDNVMYIHCTLIPYLKAAGEMKTKPTQHSVKELRSLGIQPNIIVVRTEMPVSQDMKDKLALFCDIDTKAVIEARDADTLYAVPLSLQEQNMDQIVCDHLKLDNPAADMTEWTALVEKVRNLSKKTKIALVGKYVELQDAYISVVEALRHAGYSFDTDVEVKWVNAEHVTAENVQELVGDTDGILVPGGFGDRGVEGKIVAIQYARENKVPFLGICLGMQLASIEFARNVLGLEGANSSEINPDTPYAIIDLLPEQKDVEDLGGTLRLGLYPCKLSEETNAYNAYNEPVVYERHRHRYEFNNQFRPDMEKAGFVFSGTSPDGRLVEIIELKDHPWFVAAQFHPELVSRPNRPQPLFHDFVKASLTNKESK</sequence>
<proteinExistence type="inferred from homology"/>
<feature type="chain" id="PRO_1000164926" description="CTP synthase">
    <location>
        <begin position="1"/>
        <end position="535"/>
    </location>
</feature>
<feature type="domain" description="Glutamine amidotransferase type-1" evidence="1">
    <location>
        <begin position="292"/>
        <end position="534"/>
    </location>
</feature>
<feature type="region of interest" description="Amidoligase domain" evidence="1">
    <location>
        <begin position="1"/>
        <end position="267"/>
    </location>
</feature>
<feature type="active site" description="Nucleophile; for glutamine hydrolysis" evidence="1">
    <location>
        <position position="381"/>
    </location>
</feature>
<feature type="active site" evidence="1">
    <location>
        <position position="507"/>
    </location>
</feature>
<feature type="active site" evidence="1">
    <location>
        <position position="509"/>
    </location>
</feature>
<feature type="binding site" evidence="1">
    <location>
        <position position="13"/>
    </location>
    <ligand>
        <name>CTP</name>
        <dbReference type="ChEBI" id="CHEBI:37563"/>
        <note>allosteric inhibitor</note>
    </ligand>
</feature>
<feature type="binding site" evidence="1">
    <location>
        <position position="13"/>
    </location>
    <ligand>
        <name>UTP</name>
        <dbReference type="ChEBI" id="CHEBI:46398"/>
    </ligand>
</feature>
<feature type="binding site" evidence="1">
    <location>
        <begin position="14"/>
        <end position="19"/>
    </location>
    <ligand>
        <name>ATP</name>
        <dbReference type="ChEBI" id="CHEBI:30616"/>
    </ligand>
</feature>
<feature type="binding site" evidence="1">
    <location>
        <position position="54"/>
    </location>
    <ligand>
        <name>L-glutamine</name>
        <dbReference type="ChEBI" id="CHEBI:58359"/>
    </ligand>
</feature>
<feature type="binding site" evidence="1">
    <location>
        <position position="71"/>
    </location>
    <ligand>
        <name>ATP</name>
        <dbReference type="ChEBI" id="CHEBI:30616"/>
    </ligand>
</feature>
<feature type="binding site" evidence="1">
    <location>
        <position position="71"/>
    </location>
    <ligand>
        <name>Mg(2+)</name>
        <dbReference type="ChEBI" id="CHEBI:18420"/>
    </ligand>
</feature>
<feature type="binding site" evidence="1">
    <location>
        <position position="141"/>
    </location>
    <ligand>
        <name>Mg(2+)</name>
        <dbReference type="ChEBI" id="CHEBI:18420"/>
    </ligand>
</feature>
<feature type="binding site" evidence="1">
    <location>
        <begin position="148"/>
        <end position="150"/>
    </location>
    <ligand>
        <name>CTP</name>
        <dbReference type="ChEBI" id="CHEBI:37563"/>
        <note>allosteric inhibitor</note>
    </ligand>
</feature>
<feature type="binding site" evidence="1">
    <location>
        <begin position="188"/>
        <end position="193"/>
    </location>
    <ligand>
        <name>CTP</name>
        <dbReference type="ChEBI" id="CHEBI:37563"/>
        <note>allosteric inhibitor</note>
    </ligand>
</feature>
<feature type="binding site" evidence="1">
    <location>
        <begin position="188"/>
        <end position="193"/>
    </location>
    <ligand>
        <name>UTP</name>
        <dbReference type="ChEBI" id="CHEBI:46398"/>
    </ligand>
</feature>
<feature type="binding site" evidence="1">
    <location>
        <position position="224"/>
    </location>
    <ligand>
        <name>CTP</name>
        <dbReference type="ChEBI" id="CHEBI:37563"/>
        <note>allosteric inhibitor</note>
    </ligand>
</feature>
<feature type="binding site" evidence="1">
    <location>
        <position position="224"/>
    </location>
    <ligand>
        <name>UTP</name>
        <dbReference type="ChEBI" id="CHEBI:46398"/>
    </ligand>
</feature>
<feature type="binding site" evidence="1">
    <location>
        <begin position="240"/>
        <end position="242"/>
    </location>
    <ligand>
        <name>ATP</name>
        <dbReference type="ChEBI" id="CHEBI:30616"/>
    </ligand>
</feature>
<feature type="binding site" evidence="1">
    <location>
        <position position="354"/>
    </location>
    <ligand>
        <name>L-glutamine</name>
        <dbReference type="ChEBI" id="CHEBI:58359"/>
    </ligand>
</feature>
<feature type="binding site" evidence="1">
    <location>
        <begin position="382"/>
        <end position="385"/>
    </location>
    <ligand>
        <name>L-glutamine</name>
        <dbReference type="ChEBI" id="CHEBI:58359"/>
    </ligand>
</feature>
<feature type="binding site" evidence="1">
    <location>
        <position position="405"/>
    </location>
    <ligand>
        <name>L-glutamine</name>
        <dbReference type="ChEBI" id="CHEBI:58359"/>
    </ligand>
</feature>
<feature type="binding site" evidence="1">
    <location>
        <position position="462"/>
    </location>
    <ligand>
        <name>L-glutamine</name>
        <dbReference type="ChEBI" id="CHEBI:58359"/>
    </ligand>
</feature>
<organism>
    <name type="scientific">Bacillus anthracis (strain CDC 684 / NRRL 3495)</name>
    <dbReference type="NCBI Taxonomy" id="568206"/>
    <lineage>
        <taxon>Bacteria</taxon>
        <taxon>Bacillati</taxon>
        <taxon>Bacillota</taxon>
        <taxon>Bacilli</taxon>
        <taxon>Bacillales</taxon>
        <taxon>Bacillaceae</taxon>
        <taxon>Bacillus</taxon>
        <taxon>Bacillus cereus group</taxon>
    </lineage>
</organism>
<reference key="1">
    <citation type="submission" date="2008-10" db="EMBL/GenBank/DDBJ databases">
        <title>Genome sequence of Bacillus anthracis str. CDC 684.</title>
        <authorList>
            <person name="Dodson R.J."/>
            <person name="Munk A.C."/>
            <person name="Brettin T."/>
            <person name="Bruce D."/>
            <person name="Detter C."/>
            <person name="Tapia R."/>
            <person name="Han C."/>
            <person name="Sutton G."/>
            <person name="Sims D."/>
        </authorList>
    </citation>
    <scope>NUCLEOTIDE SEQUENCE [LARGE SCALE GENOMIC DNA]</scope>
    <source>
        <strain>CDC 684 / NRRL 3495</strain>
    </source>
</reference>
<name>PYRG_BACAC</name>
<evidence type="ECO:0000255" key="1">
    <source>
        <dbReference type="HAMAP-Rule" id="MF_01227"/>
    </source>
</evidence>
<protein>
    <recommendedName>
        <fullName evidence="1">CTP synthase</fullName>
        <ecNumber evidence="1">6.3.4.2</ecNumber>
    </recommendedName>
    <alternativeName>
        <fullName evidence="1">Cytidine 5'-triphosphate synthase</fullName>
    </alternativeName>
    <alternativeName>
        <fullName evidence="1">Cytidine triphosphate synthetase</fullName>
        <shortName evidence="1">CTP synthetase</shortName>
        <shortName evidence="1">CTPS</shortName>
    </alternativeName>
    <alternativeName>
        <fullName evidence="1">UTP--ammonia ligase</fullName>
    </alternativeName>
</protein>
<accession>C3LFL2</accession>